<protein>
    <recommendedName>
        <fullName evidence="1">ATP synthase subunit b</fullName>
    </recommendedName>
    <alternativeName>
        <fullName evidence="1">ATP synthase F(0) sector subunit b</fullName>
    </alternativeName>
    <alternativeName>
        <fullName evidence="1">ATPase subunit I</fullName>
    </alternativeName>
    <alternativeName>
        <fullName evidence="1">F-type ATPase subunit b</fullName>
        <shortName evidence="1">F-ATPase subunit b</shortName>
    </alternativeName>
</protein>
<name>ATPF_SALSV</name>
<comment type="function">
    <text evidence="1">F(1)F(0) ATP synthase produces ATP from ADP in the presence of a proton or sodium gradient. F-type ATPases consist of two structural domains, F(1) containing the extramembraneous catalytic core and F(0) containing the membrane proton channel, linked together by a central stalk and a peripheral stalk. During catalysis, ATP synthesis in the catalytic domain of F(1) is coupled via a rotary mechanism of the central stalk subunits to proton translocation.</text>
</comment>
<comment type="function">
    <text evidence="1">Component of the F(0) channel, it forms part of the peripheral stalk, linking F(1) to F(0).</text>
</comment>
<comment type="subunit">
    <text evidence="1">F-type ATPases have 2 components, F(1) - the catalytic core - and F(0) - the membrane proton channel. F(1) has five subunits: alpha(3), beta(3), gamma(1), delta(1), epsilon(1). F(0) has three main subunits: a(1), b(2) and c(10-14). The alpha and beta chains form an alternating ring which encloses part of the gamma chain. F(1) is attached to F(0) by a central stalk formed by the gamma and epsilon chains, while a peripheral stalk is formed by the delta and b chains.</text>
</comment>
<comment type="subcellular location">
    <subcellularLocation>
        <location evidence="1">Cell inner membrane</location>
        <topology evidence="1">Single-pass membrane protein</topology>
    </subcellularLocation>
</comment>
<comment type="similarity">
    <text evidence="1">Belongs to the ATPase B chain family.</text>
</comment>
<feature type="chain" id="PRO_0000368749" description="ATP synthase subunit b">
    <location>
        <begin position="1"/>
        <end position="156"/>
    </location>
</feature>
<feature type="transmembrane region" description="Helical" evidence="1">
    <location>
        <begin position="11"/>
        <end position="31"/>
    </location>
</feature>
<reference key="1">
    <citation type="journal article" date="2011" name="J. Bacteriol.">
        <title>Comparative genomics of 28 Salmonella enterica isolates: evidence for CRISPR-mediated adaptive sublineage evolution.</title>
        <authorList>
            <person name="Fricke W.F."/>
            <person name="Mammel M.K."/>
            <person name="McDermott P.F."/>
            <person name="Tartera C."/>
            <person name="White D.G."/>
            <person name="Leclerc J.E."/>
            <person name="Ravel J."/>
            <person name="Cebula T.A."/>
        </authorList>
    </citation>
    <scope>NUCLEOTIDE SEQUENCE [LARGE SCALE GENOMIC DNA]</scope>
    <source>
        <strain>CVM19633</strain>
    </source>
</reference>
<proteinExistence type="inferred from homology"/>
<dbReference type="EMBL" id="CP001127">
    <property type="protein sequence ID" value="ACF91729.1"/>
    <property type="molecule type" value="Genomic_DNA"/>
</dbReference>
<dbReference type="RefSeq" id="WP_001052212.1">
    <property type="nucleotide sequence ID" value="NC_011094.1"/>
</dbReference>
<dbReference type="SMR" id="B4TN35"/>
<dbReference type="GeneID" id="66758158"/>
<dbReference type="KEGG" id="sew:SeSA_A4079"/>
<dbReference type="HOGENOM" id="CLU_079215_4_5_6"/>
<dbReference type="Proteomes" id="UP000001865">
    <property type="component" value="Chromosome"/>
</dbReference>
<dbReference type="GO" id="GO:0005886">
    <property type="term" value="C:plasma membrane"/>
    <property type="evidence" value="ECO:0007669"/>
    <property type="project" value="UniProtKB-SubCell"/>
</dbReference>
<dbReference type="GO" id="GO:0045259">
    <property type="term" value="C:proton-transporting ATP synthase complex"/>
    <property type="evidence" value="ECO:0007669"/>
    <property type="project" value="UniProtKB-KW"/>
</dbReference>
<dbReference type="GO" id="GO:0046933">
    <property type="term" value="F:proton-transporting ATP synthase activity, rotational mechanism"/>
    <property type="evidence" value="ECO:0007669"/>
    <property type="project" value="UniProtKB-UniRule"/>
</dbReference>
<dbReference type="GO" id="GO:0046961">
    <property type="term" value="F:proton-transporting ATPase activity, rotational mechanism"/>
    <property type="evidence" value="ECO:0007669"/>
    <property type="project" value="TreeGrafter"/>
</dbReference>
<dbReference type="CDD" id="cd06503">
    <property type="entry name" value="ATP-synt_Fo_b"/>
    <property type="match status" value="1"/>
</dbReference>
<dbReference type="FunFam" id="1.20.5.620:FF:000001">
    <property type="entry name" value="ATP synthase subunit b"/>
    <property type="match status" value="1"/>
</dbReference>
<dbReference type="Gene3D" id="1.20.5.620">
    <property type="entry name" value="F1F0 ATP synthase subunit B, membrane domain"/>
    <property type="match status" value="1"/>
</dbReference>
<dbReference type="HAMAP" id="MF_01398">
    <property type="entry name" value="ATP_synth_b_bprime"/>
    <property type="match status" value="1"/>
</dbReference>
<dbReference type="InterPro" id="IPR028987">
    <property type="entry name" value="ATP_synth_B-like_membr_sf"/>
</dbReference>
<dbReference type="InterPro" id="IPR002146">
    <property type="entry name" value="ATP_synth_b/b'su_bac/chlpt"/>
</dbReference>
<dbReference type="InterPro" id="IPR005864">
    <property type="entry name" value="ATP_synth_F0_bsu_bac"/>
</dbReference>
<dbReference type="InterPro" id="IPR050059">
    <property type="entry name" value="ATP_synthase_B_chain"/>
</dbReference>
<dbReference type="NCBIfam" id="TIGR01144">
    <property type="entry name" value="ATP_synt_b"/>
    <property type="match status" value="1"/>
</dbReference>
<dbReference type="NCBIfam" id="NF004411">
    <property type="entry name" value="PRK05759.1-2"/>
    <property type="match status" value="1"/>
</dbReference>
<dbReference type="NCBIfam" id="NF004413">
    <property type="entry name" value="PRK05759.1-4"/>
    <property type="match status" value="1"/>
</dbReference>
<dbReference type="PANTHER" id="PTHR33445:SF1">
    <property type="entry name" value="ATP SYNTHASE SUBUNIT B"/>
    <property type="match status" value="1"/>
</dbReference>
<dbReference type="PANTHER" id="PTHR33445">
    <property type="entry name" value="ATP SYNTHASE SUBUNIT B', CHLOROPLASTIC"/>
    <property type="match status" value="1"/>
</dbReference>
<dbReference type="Pfam" id="PF00430">
    <property type="entry name" value="ATP-synt_B"/>
    <property type="match status" value="1"/>
</dbReference>
<dbReference type="SUPFAM" id="SSF81573">
    <property type="entry name" value="F1F0 ATP synthase subunit B, membrane domain"/>
    <property type="match status" value="1"/>
</dbReference>
<organism>
    <name type="scientific">Salmonella schwarzengrund (strain CVM19633)</name>
    <dbReference type="NCBI Taxonomy" id="439843"/>
    <lineage>
        <taxon>Bacteria</taxon>
        <taxon>Pseudomonadati</taxon>
        <taxon>Pseudomonadota</taxon>
        <taxon>Gammaproteobacteria</taxon>
        <taxon>Enterobacterales</taxon>
        <taxon>Enterobacteriaceae</taxon>
        <taxon>Salmonella</taxon>
    </lineage>
</organism>
<evidence type="ECO:0000255" key="1">
    <source>
        <dbReference type="HAMAP-Rule" id="MF_01398"/>
    </source>
</evidence>
<gene>
    <name evidence="1" type="primary">atpF</name>
    <name type="ordered locus">SeSA_A4079</name>
</gene>
<sequence length="156" mass="17365">MNLNATILGQAIAFILFVWFCMKYVWPPLMAAIEKRQKEIADGLASAERAHKDLDLAKASATDQLKKAKAEAQVIIEQANKRRAQILDEAKTEAEQERTKIVAQAQAEIEAERKRAREELRKQVAILAVAGAEKIIERSVDEAANSDIVDKLVAEL</sequence>
<keyword id="KW-0066">ATP synthesis</keyword>
<keyword id="KW-0997">Cell inner membrane</keyword>
<keyword id="KW-1003">Cell membrane</keyword>
<keyword id="KW-0138">CF(0)</keyword>
<keyword id="KW-0375">Hydrogen ion transport</keyword>
<keyword id="KW-0406">Ion transport</keyword>
<keyword id="KW-0472">Membrane</keyword>
<keyword id="KW-0812">Transmembrane</keyword>
<keyword id="KW-1133">Transmembrane helix</keyword>
<keyword id="KW-0813">Transport</keyword>
<accession>B4TN35</accession>